<sequence>MEAKAVGKHLRISARKARLVADEVRGYDYKEAIDILRFTNKAASSMIINLLNSAVANAIQMNESLDPNSLFVKKIYVDDGPIMKRFRPRARGRASRIRKRLSHITVVVSEIEKKVS</sequence>
<keyword id="KW-0687">Ribonucleoprotein</keyword>
<keyword id="KW-0689">Ribosomal protein</keyword>
<keyword id="KW-0694">RNA-binding</keyword>
<keyword id="KW-0699">rRNA-binding</keyword>
<organism>
    <name type="scientific">Leptospira biflexa serovar Patoc (strain Patoc 1 / Ames)</name>
    <dbReference type="NCBI Taxonomy" id="355278"/>
    <lineage>
        <taxon>Bacteria</taxon>
        <taxon>Pseudomonadati</taxon>
        <taxon>Spirochaetota</taxon>
        <taxon>Spirochaetia</taxon>
        <taxon>Leptospirales</taxon>
        <taxon>Leptospiraceae</taxon>
        <taxon>Leptospira</taxon>
    </lineage>
</organism>
<comment type="function">
    <text evidence="1">This protein binds specifically to 23S rRNA; its binding is stimulated by other ribosomal proteins, e.g. L4, L17, and L20. It is important during the early stages of 50S assembly. It makes multiple contacts with different domains of the 23S rRNA in the assembled 50S subunit and ribosome (By similarity).</text>
</comment>
<comment type="function">
    <text evidence="1">The globular domain of the protein is located near the polypeptide exit tunnel on the outside of the subunit, while an extended beta-hairpin is found that lines the wall of the exit tunnel in the center of the 70S ribosome.</text>
</comment>
<comment type="subunit">
    <text evidence="1">Part of the 50S ribosomal subunit.</text>
</comment>
<comment type="similarity">
    <text evidence="1">Belongs to the universal ribosomal protein uL22 family.</text>
</comment>
<evidence type="ECO:0000255" key="1">
    <source>
        <dbReference type="HAMAP-Rule" id="MF_01331"/>
    </source>
</evidence>
<evidence type="ECO:0000305" key="2"/>
<dbReference type="EMBL" id="CP000777">
    <property type="protein sequence ID" value="ABZ94412.1"/>
    <property type="molecule type" value="Genomic_DNA"/>
</dbReference>
<dbReference type="RefSeq" id="WP_012476297.1">
    <property type="nucleotide sequence ID" value="NC_010842.1"/>
</dbReference>
<dbReference type="SMR" id="B0SA42"/>
<dbReference type="KEGG" id="lbf:LBF_1908"/>
<dbReference type="HOGENOM" id="CLU_083987_3_3_12"/>
<dbReference type="GO" id="GO:0022625">
    <property type="term" value="C:cytosolic large ribosomal subunit"/>
    <property type="evidence" value="ECO:0007669"/>
    <property type="project" value="TreeGrafter"/>
</dbReference>
<dbReference type="GO" id="GO:0019843">
    <property type="term" value="F:rRNA binding"/>
    <property type="evidence" value="ECO:0007669"/>
    <property type="project" value="UniProtKB-UniRule"/>
</dbReference>
<dbReference type="GO" id="GO:0003735">
    <property type="term" value="F:structural constituent of ribosome"/>
    <property type="evidence" value="ECO:0007669"/>
    <property type="project" value="InterPro"/>
</dbReference>
<dbReference type="GO" id="GO:0006412">
    <property type="term" value="P:translation"/>
    <property type="evidence" value="ECO:0007669"/>
    <property type="project" value="UniProtKB-UniRule"/>
</dbReference>
<dbReference type="CDD" id="cd00336">
    <property type="entry name" value="Ribosomal_L22"/>
    <property type="match status" value="1"/>
</dbReference>
<dbReference type="Gene3D" id="3.90.470.10">
    <property type="entry name" value="Ribosomal protein L22/L17"/>
    <property type="match status" value="1"/>
</dbReference>
<dbReference type="HAMAP" id="MF_01331_B">
    <property type="entry name" value="Ribosomal_uL22_B"/>
    <property type="match status" value="1"/>
</dbReference>
<dbReference type="InterPro" id="IPR001063">
    <property type="entry name" value="Ribosomal_uL22"/>
</dbReference>
<dbReference type="InterPro" id="IPR005727">
    <property type="entry name" value="Ribosomal_uL22_bac/chlpt-type"/>
</dbReference>
<dbReference type="InterPro" id="IPR047867">
    <property type="entry name" value="Ribosomal_uL22_bac/org-type"/>
</dbReference>
<dbReference type="InterPro" id="IPR018260">
    <property type="entry name" value="Ribosomal_uL22_CS"/>
</dbReference>
<dbReference type="InterPro" id="IPR036394">
    <property type="entry name" value="Ribosomal_uL22_sf"/>
</dbReference>
<dbReference type="NCBIfam" id="TIGR01044">
    <property type="entry name" value="rplV_bact"/>
    <property type="match status" value="1"/>
</dbReference>
<dbReference type="PANTHER" id="PTHR13501">
    <property type="entry name" value="CHLOROPLAST 50S RIBOSOMAL PROTEIN L22-RELATED"/>
    <property type="match status" value="1"/>
</dbReference>
<dbReference type="PANTHER" id="PTHR13501:SF8">
    <property type="entry name" value="LARGE RIBOSOMAL SUBUNIT PROTEIN UL22M"/>
    <property type="match status" value="1"/>
</dbReference>
<dbReference type="Pfam" id="PF00237">
    <property type="entry name" value="Ribosomal_L22"/>
    <property type="match status" value="1"/>
</dbReference>
<dbReference type="SUPFAM" id="SSF54843">
    <property type="entry name" value="Ribosomal protein L22"/>
    <property type="match status" value="1"/>
</dbReference>
<dbReference type="PROSITE" id="PS00464">
    <property type="entry name" value="RIBOSOMAL_L22"/>
    <property type="match status" value="1"/>
</dbReference>
<accession>B0SA42</accession>
<reference key="1">
    <citation type="journal article" date="2008" name="PLoS ONE">
        <title>Genome sequence of the saprophyte Leptospira biflexa provides insights into the evolution of Leptospira and the pathogenesis of leptospirosis.</title>
        <authorList>
            <person name="Picardeau M."/>
            <person name="Bulach D.M."/>
            <person name="Bouchier C."/>
            <person name="Zuerner R.L."/>
            <person name="Zidane N."/>
            <person name="Wilson P.J."/>
            <person name="Creno S."/>
            <person name="Kuczek E.S."/>
            <person name="Bommezzadri S."/>
            <person name="Davis J.C."/>
            <person name="McGrath A."/>
            <person name="Johnson M.J."/>
            <person name="Boursaux-Eude C."/>
            <person name="Seemann T."/>
            <person name="Rouy Z."/>
            <person name="Coppel R.L."/>
            <person name="Rood J.I."/>
            <person name="Lajus A."/>
            <person name="Davies J.K."/>
            <person name="Medigue C."/>
            <person name="Adler B."/>
        </authorList>
    </citation>
    <scope>NUCLEOTIDE SEQUENCE [LARGE SCALE GENOMIC DNA]</scope>
    <source>
        <strain>Patoc 1 / Ames</strain>
    </source>
</reference>
<protein>
    <recommendedName>
        <fullName evidence="1">Large ribosomal subunit protein uL22</fullName>
    </recommendedName>
    <alternativeName>
        <fullName evidence="2">50S ribosomal protein L22</fullName>
    </alternativeName>
</protein>
<proteinExistence type="inferred from homology"/>
<name>RL22_LEPBA</name>
<gene>
    <name evidence="1" type="primary">rplV</name>
    <name type="ordered locus">LBF_1908</name>
</gene>
<feature type="chain" id="PRO_1000142278" description="Large ribosomal subunit protein uL22">
    <location>
        <begin position="1"/>
        <end position="116"/>
    </location>
</feature>